<sequence length="94" mass="9987">MASGQEKGRSELDSLAREGQTVVPGGTGGKSYEAQEKLAEGRSRGGQTRKEQMGEEGYSEMGRKGGLSTNDESGGERAAREGIDIDESKFKTKS</sequence>
<accession>P22701</accession>
<reference key="1">
    <citation type="journal article" date="1991" name="DNA Seq.">
        <title>Sequence analysis of a functional member of the Em gene family from wheat.</title>
        <authorList>
            <person name="Litts J.C."/>
            <person name="Colwell G.W."/>
            <person name="Chakerian R.L."/>
            <person name="Quatrano R.S."/>
        </authorList>
    </citation>
    <scope>NUCLEOTIDE SEQUENCE [GENOMIC DNA]</scope>
    <source>
        <strain>cv. Chinese Spring</strain>
        <tissue>Embryo</tissue>
    </source>
</reference>
<gene>
    <name type="primary">EM</name>
</gene>
<proteinExistence type="evidence at transcript level"/>
<keyword id="KW-1185">Reference proteome</keyword>
<keyword id="KW-0346">Stress response</keyword>
<organism>
    <name type="scientific">Triticum aestivum</name>
    <name type="common">Wheat</name>
    <dbReference type="NCBI Taxonomy" id="4565"/>
    <lineage>
        <taxon>Eukaryota</taxon>
        <taxon>Viridiplantae</taxon>
        <taxon>Streptophyta</taxon>
        <taxon>Embryophyta</taxon>
        <taxon>Tracheophyta</taxon>
        <taxon>Spermatophyta</taxon>
        <taxon>Magnoliopsida</taxon>
        <taxon>Liliopsida</taxon>
        <taxon>Poales</taxon>
        <taxon>Poaceae</taxon>
        <taxon>BOP clade</taxon>
        <taxon>Pooideae</taxon>
        <taxon>Triticodae</taxon>
        <taxon>Triticeae</taxon>
        <taxon>Triticinae</taxon>
        <taxon>Triticum</taxon>
    </lineage>
</organism>
<comment type="function">
    <text>It is thought to provide protection for the cytoplasm during the desiccation stage of embryo development.</text>
</comment>
<comment type="developmental stage">
    <text>One of the major proteins synthesized by wheat embryos during the very early stage of germination.</text>
</comment>
<comment type="induction">
    <text>By abscisic acid (ABA) and osmotic stress.</text>
</comment>
<comment type="miscellaneous">
    <text>Wheat contains at least 10 different genes for Em protein.</text>
</comment>
<comment type="similarity">
    <text evidence="2">Belongs to the small hydrophilic plant seed protein family.</text>
</comment>
<feature type="chain" id="PRO_0000185690" description="Em protein CS41">
    <location>
        <begin position="1"/>
        <end position="94"/>
    </location>
</feature>
<feature type="region of interest" description="Disordered" evidence="1">
    <location>
        <begin position="1"/>
        <end position="94"/>
    </location>
</feature>
<feature type="compositionally biased region" description="Basic and acidic residues" evidence="1">
    <location>
        <begin position="1"/>
        <end position="16"/>
    </location>
</feature>
<feature type="compositionally biased region" description="Basic and acidic residues" evidence="1">
    <location>
        <begin position="33"/>
        <end position="53"/>
    </location>
</feature>
<feature type="compositionally biased region" description="Basic and acidic residues" evidence="1">
    <location>
        <begin position="74"/>
        <end position="94"/>
    </location>
</feature>
<name>EM2_WHEAT</name>
<protein>
    <recommendedName>
        <fullName>Em protein CS41</fullName>
    </recommendedName>
</protein>
<evidence type="ECO:0000256" key="1">
    <source>
        <dbReference type="SAM" id="MobiDB-lite"/>
    </source>
</evidence>
<evidence type="ECO:0000305" key="2"/>
<dbReference type="EMBL" id="X52103">
    <property type="protein sequence ID" value="CAA36323.1"/>
    <property type="molecule type" value="Genomic_DNA"/>
</dbReference>
<dbReference type="PIR" id="A56626">
    <property type="entry name" value="VUWTEM"/>
</dbReference>
<dbReference type="STRING" id="4565.P22701"/>
<dbReference type="PaxDb" id="4565-Traes_1AL_57BA155EC.1"/>
<dbReference type="EnsemblPlants" id="TraesARI1A03G00107470.1">
    <property type="protein sequence ID" value="TraesARI1A03G00107470.1"/>
    <property type="gene ID" value="TraesARI1A03G00107470"/>
</dbReference>
<dbReference type="EnsemblPlants" id="TraesARI1B03G00308370.1">
    <property type="protein sequence ID" value="TraesARI1B03G00308370.1"/>
    <property type="gene ID" value="TraesARI1B03G00308370"/>
</dbReference>
<dbReference type="EnsemblPlants" id="TraesCAD_scaffold_004856_01G000300.1">
    <property type="protein sequence ID" value="TraesCAD_scaffold_004856_01G000300.1"/>
    <property type="gene ID" value="TraesCAD_scaffold_004856_01G000300"/>
</dbReference>
<dbReference type="EnsemblPlants" id="TraesCAD_scaffold_055448_01G000300.1">
    <property type="protein sequence ID" value="TraesCAD_scaffold_055448_01G000300.1"/>
    <property type="gene ID" value="TraesCAD_scaffold_055448_01G000300"/>
</dbReference>
<dbReference type="EnsemblPlants" id="TraesCLE_scaffold_009574_01G000300.1">
    <property type="protein sequence ID" value="TraesCLE_scaffold_009574_01G000300.1"/>
    <property type="gene ID" value="TraesCLE_scaffold_009574_01G000300"/>
</dbReference>
<dbReference type="EnsemblPlants" id="TraesCLE_scaffold_101994_01G000100.1">
    <property type="protein sequence ID" value="TraesCLE_scaffold_101994_01G000100.1"/>
    <property type="gene ID" value="TraesCLE_scaffold_101994_01G000100"/>
</dbReference>
<dbReference type="EnsemblPlants" id="TraesCS1A02G224100.1">
    <property type="protein sequence ID" value="TraesCS1A02G224100.1"/>
    <property type="gene ID" value="TraesCS1A02G224100"/>
</dbReference>
<dbReference type="EnsemblPlants" id="TraesCS1A02G224400.1">
    <property type="protein sequence ID" value="TraesCS1A02G224400.1"/>
    <property type="gene ID" value="TraesCS1A02G224400"/>
</dbReference>
<dbReference type="EnsemblPlants" id="TraesCS1A03G0586400.1">
    <property type="protein sequence ID" value="TraesCS1A03G0586400.1.CDS"/>
    <property type="gene ID" value="TraesCS1A03G0586400"/>
</dbReference>
<dbReference type="EnsemblPlants" id="TraesCS1A03G0586800.1">
    <property type="protein sequence ID" value="TraesCS1A03G0586800.1.CDS"/>
    <property type="gene ID" value="TraesCS1A03G0586800"/>
</dbReference>
<dbReference type="EnsemblPlants" id="TraesJAG1A03G00105530.1">
    <property type="protein sequence ID" value="TraesJAG1A03G00105530.1"/>
    <property type="gene ID" value="TraesJAG1A03G00105530"/>
</dbReference>
<dbReference type="EnsemblPlants" id="TraesJAG1B03G00305170.1">
    <property type="protein sequence ID" value="TraesJAG1B03G00305170.1"/>
    <property type="gene ID" value="TraesJAG1B03G00305170"/>
</dbReference>
<dbReference type="EnsemblPlants" id="TraesJUL1A03G00105020.1">
    <property type="protein sequence ID" value="TraesJUL1A03G00105020.1"/>
    <property type="gene ID" value="TraesJUL1A03G00105020"/>
</dbReference>
<dbReference type="EnsemblPlants" id="TraesJUL1B03G00305370.1">
    <property type="protein sequence ID" value="TraesJUL1B03G00305370.1"/>
    <property type="gene ID" value="TraesJUL1B03G00305370"/>
</dbReference>
<dbReference type="EnsemblPlants" id="TraesKAR1A01G0249180.1">
    <property type="protein sequence ID" value="cds.TraesKAR1A01G0249180.1"/>
    <property type="gene ID" value="TraesKAR1A01G0249180"/>
</dbReference>
<dbReference type="EnsemblPlants" id="TraesKAR1B01G0280150.1">
    <property type="protein sequence ID" value="cds.TraesKAR1B01G0280150.1"/>
    <property type="gene ID" value="TraesKAR1B01G0280150"/>
</dbReference>
<dbReference type="EnsemblPlants" id="TraesLAC1A03G00107900.1">
    <property type="protein sequence ID" value="TraesLAC1A03G00107900.1"/>
    <property type="gene ID" value="TraesLAC1A03G00107900"/>
</dbReference>
<dbReference type="EnsemblPlants" id="TraesLAC1B03G00308960.1">
    <property type="protein sequence ID" value="TraesLAC1B03G00308960.1"/>
    <property type="gene ID" value="TraesLAC1B03G00308960"/>
</dbReference>
<dbReference type="EnsemblPlants" id="TraesLDM1A03G00105710.1">
    <property type="protein sequence ID" value="TraesLDM1A03G00105710.1"/>
    <property type="gene ID" value="TraesLDM1A03G00105710"/>
</dbReference>
<dbReference type="EnsemblPlants" id="TraesLDM1B03G00305510.1">
    <property type="protein sequence ID" value="TraesLDM1B03G00305510.1"/>
    <property type="gene ID" value="TraesLDM1B03G00305510"/>
</dbReference>
<dbReference type="EnsemblPlants" id="TraesMAC1A03G00106990.1">
    <property type="protein sequence ID" value="TraesMAC1A03G00106990.1"/>
    <property type="gene ID" value="TraesMAC1A03G00106990"/>
</dbReference>
<dbReference type="EnsemblPlants" id="TraesMAC1B03G00307520.1">
    <property type="protein sequence ID" value="TraesMAC1B03G00307520.1"/>
    <property type="gene ID" value="TraesMAC1B03G00307520"/>
</dbReference>
<dbReference type="EnsemblPlants" id="TraesNOR1A03G00106360.1">
    <property type="protein sequence ID" value="TraesNOR1A03G00106360.1"/>
    <property type="gene ID" value="TraesNOR1A03G00106360"/>
</dbReference>
<dbReference type="EnsemblPlants" id="TraesNOR1B03G00310150.1">
    <property type="protein sequence ID" value="TraesNOR1B03G00310150.1"/>
    <property type="gene ID" value="TraesNOR1B03G00310150"/>
</dbReference>
<dbReference type="EnsemblPlants" id="TraesNORUn03G04600070.1">
    <property type="protein sequence ID" value="TraesNORUn03G04600070.1"/>
    <property type="gene ID" value="TraesNORUn03G04600070"/>
</dbReference>
<dbReference type="EnsemblPlants" id="TraesPARA_EIv1.0_0047220.1">
    <property type="protein sequence ID" value="TraesPARA_EIv1.0_0047220.1.CDS"/>
    <property type="gene ID" value="TraesPARA_EIv1.0_0047220"/>
</dbReference>
<dbReference type="EnsemblPlants" id="TraesPARA_EIv1.0_0168530.1">
    <property type="protein sequence ID" value="TraesPARA_EIv1.0_0168530.1.CDS"/>
    <property type="gene ID" value="TraesPARA_EIv1.0_0168530"/>
</dbReference>
<dbReference type="EnsemblPlants" id="TraesRN1A0100629400.1">
    <property type="protein sequence ID" value="TraesRN1A0100629400.1"/>
    <property type="gene ID" value="TraesRN1A0100629400"/>
</dbReference>
<dbReference type="EnsemblPlants" id="TraesRN1A0100629500.1">
    <property type="protein sequence ID" value="TraesRN1A0100629500.1"/>
    <property type="gene ID" value="TraesRN1A0100629500"/>
</dbReference>
<dbReference type="EnsemblPlants" id="TraesROB_scaffold_012109_01G000100.1">
    <property type="protein sequence ID" value="TraesROB_scaffold_012109_01G000100.1"/>
    <property type="gene ID" value="TraesROB_scaffold_012109_01G000100"/>
</dbReference>
<dbReference type="EnsemblPlants" id="TraesROB_scaffold_026963_01G000300.1">
    <property type="protein sequence ID" value="TraesROB_scaffold_026963_01G000300.1"/>
    <property type="gene ID" value="TraesROB_scaffold_026963_01G000300"/>
</dbReference>
<dbReference type="EnsemblPlants" id="TraesSTA1B03G00304040.1">
    <property type="protein sequence ID" value="TraesSTA1B03G00304040.1"/>
    <property type="gene ID" value="TraesSTA1B03G00304040"/>
</dbReference>
<dbReference type="EnsemblPlants" id="TraesSYM1A03G00108330.1">
    <property type="protein sequence ID" value="TraesSYM1A03G00108330.1"/>
    <property type="gene ID" value="TraesSYM1A03G00108330"/>
</dbReference>
<dbReference type="EnsemblPlants" id="TraesSYM1B03G00312320.1">
    <property type="protein sequence ID" value="TraesSYM1B03G00312320.1"/>
    <property type="gene ID" value="TraesSYM1B03G00312320"/>
</dbReference>
<dbReference type="EnsemblPlants" id="TraesWEE_scaffold_033887_01G000100.1">
    <property type="protein sequence ID" value="TraesWEE_scaffold_033887_01G000100.1"/>
    <property type="gene ID" value="TraesWEE_scaffold_033887_01G000100"/>
</dbReference>
<dbReference type="Gramene" id="TraesARI1A03G00107470.1">
    <property type="protein sequence ID" value="TraesARI1A03G00107470.1"/>
    <property type="gene ID" value="TraesARI1A03G00107470"/>
</dbReference>
<dbReference type="Gramene" id="TraesARI1B03G00308370.1">
    <property type="protein sequence ID" value="TraesARI1B03G00308370.1"/>
    <property type="gene ID" value="TraesARI1B03G00308370"/>
</dbReference>
<dbReference type="Gramene" id="TraesCAD_scaffold_004856_01G000300.1">
    <property type="protein sequence ID" value="TraesCAD_scaffold_004856_01G000300.1"/>
    <property type="gene ID" value="TraesCAD_scaffold_004856_01G000300"/>
</dbReference>
<dbReference type="Gramene" id="TraesCAD_scaffold_055448_01G000300.1">
    <property type="protein sequence ID" value="TraesCAD_scaffold_055448_01G000300.1"/>
    <property type="gene ID" value="TraesCAD_scaffold_055448_01G000300"/>
</dbReference>
<dbReference type="Gramene" id="TraesCLE_scaffold_009574_01G000300.1">
    <property type="protein sequence ID" value="TraesCLE_scaffold_009574_01G000300.1"/>
    <property type="gene ID" value="TraesCLE_scaffold_009574_01G000300"/>
</dbReference>
<dbReference type="Gramene" id="TraesCLE_scaffold_101994_01G000100.1">
    <property type="protein sequence ID" value="TraesCLE_scaffold_101994_01G000100.1"/>
    <property type="gene ID" value="TraesCLE_scaffold_101994_01G000100"/>
</dbReference>
<dbReference type="Gramene" id="TraesCS1A02G224100.1">
    <property type="protein sequence ID" value="TraesCS1A02G224100.1"/>
    <property type="gene ID" value="TraesCS1A02G224100"/>
</dbReference>
<dbReference type="Gramene" id="TraesCS1A02G224400.1">
    <property type="protein sequence ID" value="TraesCS1A02G224400.1"/>
    <property type="gene ID" value="TraesCS1A02G224400"/>
</dbReference>
<dbReference type="Gramene" id="TraesCS1A03G0586400.1">
    <property type="protein sequence ID" value="TraesCS1A03G0586400.1.CDS"/>
    <property type="gene ID" value="TraesCS1A03G0586400"/>
</dbReference>
<dbReference type="Gramene" id="TraesCS1A03G0586800.1">
    <property type="protein sequence ID" value="TraesCS1A03G0586800.1.CDS"/>
    <property type="gene ID" value="TraesCS1A03G0586800"/>
</dbReference>
<dbReference type="Gramene" id="TraesJAG1A03G00105530.1">
    <property type="protein sequence ID" value="TraesJAG1A03G00105530.1"/>
    <property type="gene ID" value="TraesJAG1A03G00105530"/>
</dbReference>
<dbReference type="Gramene" id="TraesJAG1B03G00305170.1">
    <property type="protein sequence ID" value="TraesJAG1B03G00305170.1"/>
    <property type="gene ID" value="TraesJAG1B03G00305170"/>
</dbReference>
<dbReference type="Gramene" id="TraesJUL1A03G00105020.1">
    <property type="protein sequence ID" value="TraesJUL1A03G00105020.1"/>
    <property type="gene ID" value="TraesJUL1A03G00105020"/>
</dbReference>
<dbReference type="Gramene" id="TraesJUL1B03G00305370.1">
    <property type="protein sequence ID" value="TraesJUL1B03G00305370.1"/>
    <property type="gene ID" value="TraesJUL1B03G00305370"/>
</dbReference>
<dbReference type="Gramene" id="TraesKAR1A01G0249180.1">
    <property type="protein sequence ID" value="cds.TraesKAR1A01G0249180.1"/>
    <property type="gene ID" value="TraesKAR1A01G0249180"/>
</dbReference>
<dbReference type="Gramene" id="TraesKAR1B01G0280150.1">
    <property type="protein sequence ID" value="cds.TraesKAR1B01G0280150.1"/>
    <property type="gene ID" value="TraesKAR1B01G0280150"/>
</dbReference>
<dbReference type="Gramene" id="TraesLAC1A03G00107900.1">
    <property type="protein sequence ID" value="TraesLAC1A03G00107900.1"/>
    <property type="gene ID" value="TraesLAC1A03G00107900"/>
</dbReference>
<dbReference type="Gramene" id="TraesLAC1B03G00308960.1">
    <property type="protein sequence ID" value="TraesLAC1B03G00308960.1"/>
    <property type="gene ID" value="TraesLAC1B03G00308960"/>
</dbReference>
<dbReference type="Gramene" id="TraesLDM1A03G00105710.1">
    <property type="protein sequence ID" value="TraesLDM1A03G00105710.1"/>
    <property type="gene ID" value="TraesLDM1A03G00105710"/>
</dbReference>
<dbReference type="Gramene" id="TraesLDM1B03G00305510.1">
    <property type="protein sequence ID" value="TraesLDM1B03G00305510.1"/>
    <property type="gene ID" value="TraesLDM1B03G00305510"/>
</dbReference>
<dbReference type="Gramene" id="TraesMAC1A03G00106990.1">
    <property type="protein sequence ID" value="TraesMAC1A03G00106990.1"/>
    <property type="gene ID" value="TraesMAC1A03G00106990"/>
</dbReference>
<dbReference type="Gramene" id="TraesMAC1B03G00307520.1">
    <property type="protein sequence ID" value="TraesMAC1B03G00307520.1"/>
    <property type="gene ID" value="TraesMAC1B03G00307520"/>
</dbReference>
<dbReference type="Gramene" id="TraesNOR1A03G00106360.1">
    <property type="protein sequence ID" value="TraesNOR1A03G00106360.1"/>
    <property type="gene ID" value="TraesNOR1A03G00106360"/>
</dbReference>
<dbReference type="Gramene" id="TraesNOR1B03G00310150.1">
    <property type="protein sequence ID" value="TraesNOR1B03G00310150.1"/>
    <property type="gene ID" value="TraesNOR1B03G00310150"/>
</dbReference>
<dbReference type="Gramene" id="TraesNORUn03G04600070.1">
    <property type="protein sequence ID" value="TraesNORUn03G04600070.1"/>
    <property type="gene ID" value="TraesNORUn03G04600070"/>
</dbReference>
<dbReference type="Gramene" id="TraesPARA_EIv1.0_0047220.1">
    <property type="protein sequence ID" value="TraesPARA_EIv1.0_0047220.1.CDS"/>
    <property type="gene ID" value="TraesPARA_EIv1.0_0047220"/>
</dbReference>
<dbReference type="Gramene" id="TraesPARA_EIv1.0_0168530.1">
    <property type="protein sequence ID" value="TraesPARA_EIv1.0_0168530.1.CDS"/>
    <property type="gene ID" value="TraesPARA_EIv1.0_0168530"/>
</dbReference>
<dbReference type="Gramene" id="TraesRN1A0100629400.1">
    <property type="protein sequence ID" value="TraesRN1A0100629400.1"/>
    <property type="gene ID" value="TraesRN1A0100629400"/>
</dbReference>
<dbReference type="Gramene" id="TraesRN1A0100629500.1">
    <property type="protein sequence ID" value="TraesRN1A0100629500.1"/>
    <property type="gene ID" value="TraesRN1A0100629500"/>
</dbReference>
<dbReference type="Gramene" id="TraesROB_scaffold_012109_01G000100.1">
    <property type="protein sequence ID" value="TraesROB_scaffold_012109_01G000100.1"/>
    <property type="gene ID" value="TraesROB_scaffold_012109_01G000100"/>
</dbReference>
<dbReference type="Gramene" id="TraesROB_scaffold_026963_01G000300.1">
    <property type="protein sequence ID" value="TraesROB_scaffold_026963_01G000300.1"/>
    <property type="gene ID" value="TraesROB_scaffold_026963_01G000300"/>
</dbReference>
<dbReference type="Gramene" id="TraesSTA1B03G00304040.1">
    <property type="protein sequence ID" value="TraesSTA1B03G00304040.1"/>
    <property type="gene ID" value="TraesSTA1B03G00304040"/>
</dbReference>
<dbReference type="Gramene" id="TraesSYM1A03G00108330.1">
    <property type="protein sequence ID" value="TraesSYM1A03G00108330.1"/>
    <property type="gene ID" value="TraesSYM1A03G00108330"/>
</dbReference>
<dbReference type="Gramene" id="TraesSYM1B03G00312320.1">
    <property type="protein sequence ID" value="TraesSYM1B03G00312320.1"/>
    <property type="gene ID" value="TraesSYM1B03G00312320"/>
</dbReference>
<dbReference type="Gramene" id="TraesWEE_scaffold_033887_01G000100.1">
    <property type="protein sequence ID" value="TraesWEE_scaffold_033887_01G000100.1"/>
    <property type="gene ID" value="TraesWEE_scaffold_033887_01G000100"/>
</dbReference>
<dbReference type="OMA" id="RHEGYSE"/>
<dbReference type="OrthoDB" id="540492at2759"/>
<dbReference type="Proteomes" id="UP000019116">
    <property type="component" value="Chromosome 1A"/>
</dbReference>
<dbReference type="GO" id="GO:0009737">
    <property type="term" value="P:response to abscisic acid"/>
    <property type="evidence" value="ECO:0000318"/>
    <property type="project" value="GO_Central"/>
</dbReference>
<dbReference type="InterPro" id="IPR038956">
    <property type="entry name" value="LEA_5"/>
</dbReference>
<dbReference type="InterPro" id="IPR022377">
    <property type="entry name" value="Sm_Hydphi_plant_seed_CS"/>
</dbReference>
<dbReference type="InterPro" id="IPR000389">
    <property type="entry name" value="Small_hydrophilic_seed_prot"/>
</dbReference>
<dbReference type="PANTHER" id="PTHR34671:SF5">
    <property type="entry name" value="EM PROTEIN CS41"/>
    <property type="match status" value="1"/>
</dbReference>
<dbReference type="PANTHER" id="PTHR34671">
    <property type="entry name" value="EM-LIKE PROTEIN GEA1"/>
    <property type="match status" value="1"/>
</dbReference>
<dbReference type="Pfam" id="PF00477">
    <property type="entry name" value="LEA_5"/>
    <property type="match status" value="1"/>
</dbReference>
<dbReference type="PROSITE" id="PS00431">
    <property type="entry name" value="SMALL_HYDR_PLANT_SEED"/>
    <property type="match status" value="1"/>
</dbReference>